<reference key="1">
    <citation type="submission" date="1994-03" db="EMBL/GenBank/DDBJ databases">
        <authorList>
            <person name="Smith D.R."/>
            <person name="Robison K."/>
        </authorList>
    </citation>
    <scope>NUCLEOTIDE SEQUENCE [GENOMIC DNA]</scope>
</reference>
<reference key="2">
    <citation type="journal article" date="2001" name="Nature">
        <title>Massive gene decay in the leprosy bacillus.</title>
        <authorList>
            <person name="Cole S.T."/>
            <person name="Eiglmeier K."/>
            <person name="Parkhill J."/>
            <person name="James K.D."/>
            <person name="Thomson N.R."/>
            <person name="Wheeler P.R."/>
            <person name="Honore N."/>
            <person name="Garnier T."/>
            <person name="Churcher C.M."/>
            <person name="Harris D.E."/>
            <person name="Mungall K.L."/>
            <person name="Basham D."/>
            <person name="Brown D."/>
            <person name="Chillingworth T."/>
            <person name="Connor R."/>
            <person name="Davies R.M."/>
            <person name="Devlin K."/>
            <person name="Duthoy S."/>
            <person name="Feltwell T."/>
            <person name="Fraser A."/>
            <person name="Hamlin N."/>
            <person name="Holroyd S."/>
            <person name="Hornsby T."/>
            <person name="Jagels K."/>
            <person name="Lacroix C."/>
            <person name="Maclean J."/>
            <person name="Moule S."/>
            <person name="Murphy L.D."/>
            <person name="Oliver K."/>
            <person name="Quail M.A."/>
            <person name="Rajandream M.A."/>
            <person name="Rutherford K.M."/>
            <person name="Rutter S."/>
            <person name="Seeger K."/>
            <person name="Simon S."/>
            <person name="Simmonds M."/>
            <person name="Skelton J."/>
            <person name="Squares R."/>
            <person name="Squares S."/>
            <person name="Stevens K."/>
            <person name="Taylor K."/>
            <person name="Whitehead S."/>
            <person name="Woodward J.R."/>
            <person name="Barrell B.G."/>
        </authorList>
    </citation>
    <scope>NUCLEOTIDE SEQUENCE [LARGE SCALE GENOMIC DNA]</scope>
    <source>
        <strain>TN</strain>
    </source>
</reference>
<protein>
    <recommendedName>
        <fullName>Uncharacterized protein ML0386</fullName>
    </recommendedName>
</protein>
<accession>Q49742</accession>
<evidence type="ECO:0000256" key="1">
    <source>
        <dbReference type="SAM" id="MobiDB-lite"/>
    </source>
</evidence>
<evidence type="ECO:0000305" key="2"/>
<proteinExistence type="predicted"/>
<organism>
    <name type="scientific">Mycobacterium leprae (strain TN)</name>
    <dbReference type="NCBI Taxonomy" id="272631"/>
    <lineage>
        <taxon>Bacteria</taxon>
        <taxon>Bacillati</taxon>
        <taxon>Actinomycetota</taxon>
        <taxon>Actinomycetes</taxon>
        <taxon>Mycobacteriales</taxon>
        <taxon>Mycobacteriaceae</taxon>
        <taxon>Mycobacterium</taxon>
    </lineage>
</organism>
<keyword id="KW-1185">Reference proteome</keyword>
<dbReference type="EMBL" id="U00015">
    <property type="protein sequence ID" value="AAC43247.1"/>
    <property type="molecule type" value="Genomic_DNA"/>
</dbReference>
<dbReference type="EMBL" id="AL583918">
    <property type="protein sequence ID" value="CAC29894.1"/>
    <property type="molecule type" value="Genomic_DNA"/>
</dbReference>
<dbReference type="PIR" id="S72838">
    <property type="entry name" value="S72838"/>
</dbReference>
<dbReference type="RefSeq" id="NP_301376.1">
    <property type="nucleotide sequence ID" value="NC_002677.1"/>
</dbReference>
<dbReference type="RefSeq" id="WP_010907700.1">
    <property type="nucleotide sequence ID" value="NC_002677.1"/>
</dbReference>
<dbReference type="SMR" id="Q49742"/>
<dbReference type="STRING" id="272631.gene:17574205"/>
<dbReference type="KEGG" id="mle:ML0386"/>
<dbReference type="PATRIC" id="fig|272631.5.peg.652"/>
<dbReference type="Leproma" id="ML0386"/>
<dbReference type="eggNOG" id="ENOG5032U9K">
    <property type="taxonomic scope" value="Bacteria"/>
</dbReference>
<dbReference type="HOGENOM" id="CLU_122324_1_0_11"/>
<dbReference type="OrthoDB" id="3476210at2"/>
<dbReference type="Proteomes" id="UP000000806">
    <property type="component" value="Chromosome"/>
</dbReference>
<dbReference type="InterPro" id="IPR035165">
    <property type="entry name" value="DUF5319"/>
</dbReference>
<dbReference type="Pfam" id="PF17252">
    <property type="entry name" value="DUF5319"/>
    <property type="match status" value="1"/>
</dbReference>
<feature type="chain" id="PRO_0000104132" description="Uncharacterized protein ML0386">
    <location>
        <begin position="1"/>
        <end position="137"/>
    </location>
</feature>
<feature type="region of interest" description="Disordered" evidence="1">
    <location>
        <begin position="1"/>
        <end position="32"/>
    </location>
</feature>
<gene>
    <name type="ordered locus">ML0386</name>
    <name type="ORF">B1620_F3_131</name>
</gene>
<comment type="similarity">
    <text evidence="2">To M.tuberculosis Rv3412.</text>
</comment>
<sequence length="137" mass="15327">MRDHLPPGLPPDPFADDPCDPSAALDAVEPGQPLDQQERIAVEADLADLAVYEALLAHKGIRGLVVCCDECQQDHYHDWDMLRANLLQLLIDGTVRPHEPAYDPEPDSYVTWDYCRGYADASLNQATSDADGYRRRH</sequence>
<name>Y386_MYCLE</name>